<gene>
    <name evidence="1" type="primary">udk</name>
    <name type="ordered locus">SAS1547</name>
</gene>
<protein>
    <recommendedName>
        <fullName evidence="1">Uridine kinase</fullName>
        <ecNumber evidence="1">2.7.1.48</ecNumber>
    </recommendedName>
    <alternativeName>
        <fullName evidence="1">Cytidine monophosphokinase</fullName>
    </alternativeName>
    <alternativeName>
        <fullName evidence="1">Uridine monophosphokinase</fullName>
    </alternativeName>
</protein>
<accession>Q6G8V8</accession>
<evidence type="ECO:0000255" key="1">
    <source>
        <dbReference type="HAMAP-Rule" id="MF_00551"/>
    </source>
</evidence>
<reference key="1">
    <citation type="journal article" date="2004" name="Proc. Natl. Acad. Sci. U.S.A.">
        <title>Complete genomes of two clinical Staphylococcus aureus strains: evidence for the rapid evolution of virulence and drug resistance.</title>
        <authorList>
            <person name="Holden M.T.G."/>
            <person name="Feil E.J."/>
            <person name="Lindsay J.A."/>
            <person name="Peacock S.J."/>
            <person name="Day N.P.J."/>
            <person name="Enright M.C."/>
            <person name="Foster T.J."/>
            <person name="Moore C.E."/>
            <person name="Hurst L."/>
            <person name="Atkin R."/>
            <person name="Barron A."/>
            <person name="Bason N."/>
            <person name="Bentley S.D."/>
            <person name="Chillingworth C."/>
            <person name="Chillingworth T."/>
            <person name="Churcher C."/>
            <person name="Clark L."/>
            <person name="Corton C."/>
            <person name="Cronin A."/>
            <person name="Doggett J."/>
            <person name="Dowd L."/>
            <person name="Feltwell T."/>
            <person name="Hance Z."/>
            <person name="Harris B."/>
            <person name="Hauser H."/>
            <person name="Holroyd S."/>
            <person name="Jagels K."/>
            <person name="James K.D."/>
            <person name="Lennard N."/>
            <person name="Line A."/>
            <person name="Mayes R."/>
            <person name="Moule S."/>
            <person name="Mungall K."/>
            <person name="Ormond D."/>
            <person name="Quail M.A."/>
            <person name="Rabbinowitsch E."/>
            <person name="Rutherford K.M."/>
            <person name="Sanders M."/>
            <person name="Sharp S."/>
            <person name="Simmonds M."/>
            <person name="Stevens K."/>
            <person name="Whitehead S."/>
            <person name="Barrell B.G."/>
            <person name="Spratt B.G."/>
            <person name="Parkhill J."/>
        </authorList>
    </citation>
    <scope>NUCLEOTIDE SEQUENCE [LARGE SCALE GENOMIC DNA]</scope>
    <source>
        <strain>MSSA476</strain>
    </source>
</reference>
<name>URK_STAAS</name>
<feature type="chain" id="PRO_0000164492" description="Uridine kinase">
    <location>
        <begin position="1"/>
        <end position="207"/>
    </location>
</feature>
<feature type="binding site" evidence="1">
    <location>
        <begin position="11"/>
        <end position="18"/>
    </location>
    <ligand>
        <name>ATP</name>
        <dbReference type="ChEBI" id="CHEBI:30616"/>
    </ligand>
</feature>
<keyword id="KW-0067">ATP-binding</keyword>
<keyword id="KW-0963">Cytoplasm</keyword>
<keyword id="KW-0418">Kinase</keyword>
<keyword id="KW-0547">Nucleotide-binding</keyword>
<keyword id="KW-0808">Transferase</keyword>
<sequence length="207" mass="23505">MKATTIIGIAGGSGSGKTTVTNEIMKNLEGHSVALLAQDYYYKDQKHLTFDERLETNYDHPFAFDNDLLIENLKDLKNGKAVEVPTYDYASHTRSDITIDFKPKDVIIVEGIFALENKVLRDMMDVKIYVDTDADLRILRRLTRDTKERGRSMDSVINQYLSVVRPMHDQFIEPTKKYADIIIPEGGSNKVAIDIMTTKIQSLVSKQ</sequence>
<proteinExistence type="inferred from homology"/>
<comment type="catalytic activity">
    <reaction evidence="1">
        <text>uridine + ATP = UMP + ADP + H(+)</text>
        <dbReference type="Rhea" id="RHEA:16825"/>
        <dbReference type="ChEBI" id="CHEBI:15378"/>
        <dbReference type="ChEBI" id="CHEBI:16704"/>
        <dbReference type="ChEBI" id="CHEBI:30616"/>
        <dbReference type="ChEBI" id="CHEBI:57865"/>
        <dbReference type="ChEBI" id="CHEBI:456216"/>
        <dbReference type="EC" id="2.7.1.48"/>
    </reaction>
</comment>
<comment type="catalytic activity">
    <reaction evidence="1">
        <text>cytidine + ATP = CMP + ADP + H(+)</text>
        <dbReference type="Rhea" id="RHEA:24674"/>
        <dbReference type="ChEBI" id="CHEBI:15378"/>
        <dbReference type="ChEBI" id="CHEBI:17562"/>
        <dbReference type="ChEBI" id="CHEBI:30616"/>
        <dbReference type="ChEBI" id="CHEBI:60377"/>
        <dbReference type="ChEBI" id="CHEBI:456216"/>
        <dbReference type="EC" id="2.7.1.48"/>
    </reaction>
</comment>
<comment type="pathway">
    <text evidence="1">Pyrimidine metabolism; CTP biosynthesis via salvage pathway; CTP from cytidine: step 1/3.</text>
</comment>
<comment type="pathway">
    <text evidence="1">Pyrimidine metabolism; UMP biosynthesis via salvage pathway; UMP from uridine: step 1/1.</text>
</comment>
<comment type="subcellular location">
    <subcellularLocation>
        <location evidence="1">Cytoplasm</location>
    </subcellularLocation>
</comment>
<comment type="similarity">
    <text evidence="1">Belongs to the uridine kinase family.</text>
</comment>
<organism>
    <name type="scientific">Staphylococcus aureus (strain MSSA476)</name>
    <dbReference type="NCBI Taxonomy" id="282459"/>
    <lineage>
        <taxon>Bacteria</taxon>
        <taxon>Bacillati</taxon>
        <taxon>Bacillota</taxon>
        <taxon>Bacilli</taxon>
        <taxon>Bacillales</taxon>
        <taxon>Staphylococcaceae</taxon>
        <taxon>Staphylococcus</taxon>
    </lineage>
</organism>
<dbReference type="EC" id="2.7.1.48" evidence="1"/>
<dbReference type="EMBL" id="BX571857">
    <property type="protein sequence ID" value="CAG43348.1"/>
    <property type="molecule type" value="Genomic_DNA"/>
</dbReference>
<dbReference type="RefSeq" id="WP_000648617.1">
    <property type="nucleotide sequence ID" value="NC_002953.3"/>
</dbReference>
<dbReference type="SMR" id="Q6G8V8"/>
<dbReference type="KEGG" id="sas:SAS1547"/>
<dbReference type="HOGENOM" id="CLU_021278_1_2_9"/>
<dbReference type="UniPathway" id="UPA00574">
    <property type="reaction ID" value="UER00637"/>
</dbReference>
<dbReference type="UniPathway" id="UPA00579">
    <property type="reaction ID" value="UER00640"/>
</dbReference>
<dbReference type="GO" id="GO:0005737">
    <property type="term" value="C:cytoplasm"/>
    <property type="evidence" value="ECO:0007669"/>
    <property type="project" value="UniProtKB-SubCell"/>
</dbReference>
<dbReference type="GO" id="GO:0005524">
    <property type="term" value="F:ATP binding"/>
    <property type="evidence" value="ECO:0007669"/>
    <property type="project" value="UniProtKB-UniRule"/>
</dbReference>
<dbReference type="GO" id="GO:0043771">
    <property type="term" value="F:cytidine kinase activity"/>
    <property type="evidence" value="ECO:0007669"/>
    <property type="project" value="RHEA"/>
</dbReference>
<dbReference type="GO" id="GO:0004849">
    <property type="term" value="F:uridine kinase activity"/>
    <property type="evidence" value="ECO:0007669"/>
    <property type="project" value="UniProtKB-UniRule"/>
</dbReference>
<dbReference type="GO" id="GO:0044211">
    <property type="term" value="P:CTP salvage"/>
    <property type="evidence" value="ECO:0007669"/>
    <property type="project" value="UniProtKB-UniRule"/>
</dbReference>
<dbReference type="GO" id="GO:0044206">
    <property type="term" value="P:UMP salvage"/>
    <property type="evidence" value="ECO:0007669"/>
    <property type="project" value="UniProtKB-UniRule"/>
</dbReference>
<dbReference type="CDD" id="cd02023">
    <property type="entry name" value="UMPK"/>
    <property type="match status" value="1"/>
</dbReference>
<dbReference type="Gene3D" id="3.40.50.300">
    <property type="entry name" value="P-loop containing nucleotide triphosphate hydrolases"/>
    <property type="match status" value="1"/>
</dbReference>
<dbReference type="HAMAP" id="MF_00551">
    <property type="entry name" value="Uridine_kinase"/>
    <property type="match status" value="1"/>
</dbReference>
<dbReference type="InterPro" id="IPR027417">
    <property type="entry name" value="P-loop_NTPase"/>
</dbReference>
<dbReference type="InterPro" id="IPR006083">
    <property type="entry name" value="PRK/URK"/>
</dbReference>
<dbReference type="InterPro" id="IPR026008">
    <property type="entry name" value="Uridine_kinase"/>
</dbReference>
<dbReference type="InterPro" id="IPR000764">
    <property type="entry name" value="Uridine_kinase-like"/>
</dbReference>
<dbReference type="NCBIfam" id="NF004018">
    <property type="entry name" value="PRK05480.1"/>
    <property type="match status" value="1"/>
</dbReference>
<dbReference type="NCBIfam" id="TIGR00235">
    <property type="entry name" value="udk"/>
    <property type="match status" value="1"/>
</dbReference>
<dbReference type="PANTHER" id="PTHR10285">
    <property type="entry name" value="URIDINE KINASE"/>
    <property type="match status" value="1"/>
</dbReference>
<dbReference type="Pfam" id="PF00485">
    <property type="entry name" value="PRK"/>
    <property type="match status" value="1"/>
</dbReference>
<dbReference type="PRINTS" id="PR00988">
    <property type="entry name" value="URIDINKINASE"/>
</dbReference>
<dbReference type="SUPFAM" id="SSF52540">
    <property type="entry name" value="P-loop containing nucleoside triphosphate hydrolases"/>
    <property type="match status" value="1"/>
</dbReference>